<evidence type="ECO:0000255" key="1">
    <source>
        <dbReference type="HAMAP-Rule" id="MF_00374"/>
    </source>
</evidence>
<evidence type="ECO:0000305" key="2"/>
<name>RL29_ECOLU</name>
<keyword id="KW-0687">Ribonucleoprotein</keyword>
<keyword id="KW-0689">Ribosomal protein</keyword>
<comment type="similarity">
    <text evidence="1">Belongs to the universal ribosomal protein uL29 family.</text>
</comment>
<accession>B7NDT3</accession>
<reference key="1">
    <citation type="journal article" date="2009" name="PLoS Genet.">
        <title>Organised genome dynamics in the Escherichia coli species results in highly diverse adaptive paths.</title>
        <authorList>
            <person name="Touchon M."/>
            <person name="Hoede C."/>
            <person name="Tenaillon O."/>
            <person name="Barbe V."/>
            <person name="Baeriswyl S."/>
            <person name="Bidet P."/>
            <person name="Bingen E."/>
            <person name="Bonacorsi S."/>
            <person name="Bouchier C."/>
            <person name="Bouvet O."/>
            <person name="Calteau A."/>
            <person name="Chiapello H."/>
            <person name="Clermont O."/>
            <person name="Cruveiller S."/>
            <person name="Danchin A."/>
            <person name="Diard M."/>
            <person name="Dossat C."/>
            <person name="Karoui M.E."/>
            <person name="Frapy E."/>
            <person name="Garry L."/>
            <person name="Ghigo J.M."/>
            <person name="Gilles A.M."/>
            <person name="Johnson J."/>
            <person name="Le Bouguenec C."/>
            <person name="Lescat M."/>
            <person name="Mangenot S."/>
            <person name="Martinez-Jehanne V."/>
            <person name="Matic I."/>
            <person name="Nassif X."/>
            <person name="Oztas S."/>
            <person name="Petit M.A."/>
            <person name="Pichon C."/>
            <person name="Rouy Z."/>
            <person name="Ruf C.S."/>
            <person name="Schneider D."/>
            <person name="Tourret J."/>
            <person name="Vacherie B."/>
            <person name="Vallenet D."/>
            <person name="Medigue C."/>
            <person name="Rocha E.P.C."/>
            <person name="Denamur E."/>
        </authorList>
    </citation>
    <scope>NUCLEOTIDE SEQUENCE [LARGE SCALE GENOMIC DNA]</scope>
    <source>
        <strain>UMN026 / ExPEC</strain>
    </source>
</reference>
<feature type="chain" id="PRO_1000121769" description="Large ribosomal subunit protein uL29">
    <location>
        <begin position="1"/>
        <end position="63"/>
    </location>
</feature>
<gene>
    <name evidence="1" type="primary">rpmC</name>
    <name type="ordered locus">ECUMN_3785</name>
</gene>
<sequence length="63" mass="7273">MKAKELREKSVEELNTELLNLLREQFNLRMQAASGQLQQSHLLKQVRRDVARVKTLLNEKAGA</sequence>
<proteinExistence type="inferred from homology"/>
<protein>
    <recommendedName>
        <fullName evidence="1">Large ribosomal subunit protein uL29</fullName>
    </recommendedName>
    <alternativeName>
        <fullName evidence="2">50S ribosomal protein L29</fullName>
    </alternativeName>
</protein>
<dbReference type="EMBL" id="CU928163">
    <property type="protein sequence ID" value="CAR14933.1"/>
    <property type="molecule type" value="Genomic_DNA"/>
</dbReference>
<dbReference type="RefSeq" id="WP_000644741.1">
    <property type="nucleotide sequence ID" value="NC_011751.1"/>
</dbReference>
<dbReference type="RefSeq" id="YP_002414438.1">
    <property type="nucleotide sequence ID" value="NC_011751.1"/>
</dbReference>
<dbReference type="SMR" id="B7NDT3"/>
<dbReference type="STRING" id="585056.ECUMN_3785"/>
<dbReference type="GeneID" id="93778675"/>
<dbReference type="KEGG" id="eum:ECUMN_3785"/>
<dbReference type="PATRIC" id="fig|585056.7.peg.3960"/>
<dbReference type="HOGENOM" id="CLU_158491_1_2_6"/>
<dbReference type="Proteomes" id="UP000007097">
    <property type="component" value="Chromosome"/>
</dbReference>
<dbReference type="GO" id="GO:0022625">
    <property type="term" value="C:cytosolic large ribosomal subunit"/>
    <property type="evidence" value="ECO:0007669"/>
    <property type="project" value="TreeGrafter"/>
</dbReference>
<dbReference type="GO" id="GO:0003735">
    <property type="term" value="F:structural constituent of ribosome"/>
    <property type="evidence" value="ECO:0007669"/>
    <property type="project" value="InterPro"/>
</dbReference>
<dbReference type="GO" id="GO:0006412">
    <property type="term" value="P:translation"/>
    <property type="evidence" value="ECO:0007669"/>
    <property type="project" value="UniProtKB-UniRule"/>
</dbReference>
<dbReference type="CDD" id="cd00427">
    <property type="entry name" value="Ribosomal_L29_HIP"/>
    <property type="match status" value="1"/>
</dbReference>
<dbReference type="Gene3D" id="6.10.140.1970">
    <property type="match status" value="1"/>
</dbReference>
<dbReference type="HAMAP" id="MF_00374">
    <property type="entry name" value="Ribosomal_uL29"/>
    <property type="match status" value="1"/>
</dbReference>
<dbReference type="InterPro" id="IPR050063">
    <property type="entry name" value="Ribosomal_protein_uL29"/>
</dbReference>
<dbReference type="InterPro" id="IPR001854">
    <property type="entry name" value="Ribosomal_uL29"/>
</dbReference>
<dbReference type="InterPro" id="IPR018254">
    <property type="entry name" value="Ribosomal_uL29_CS"/>
</dbReference>
<dbReference type="InterPro" id="IPR036049">
    <property type="entry name" value="Ribosomal_uL29_sf"/>
</dbReference>
<dbReference type="NCBIfam" id="TIGR00012">
    <property type="entry name" value="L29"/>
    <property type="match status" value="1"/>
</dbReference>
<dbReference type="PANTHER" id="PTHR10916">
    <property type="entry name" value="60S RIBOSOMAL PROTEIN L35/50S RIBOSOMAL PROTEIN L29"/>
    <property type="match status" value="1"/>
</dbReference>
<dbReference type="PANTHER" id="PTHR10916:SF0">
    <property type="entry name" value="LARGE RIBOSOMAL SUBUNIT PROTEIN UL29C"/>
    <property type="match status" value="1"/>
</dbReference>
<dbReference type="Pfam" id="PF00831">
    <property type="entry name" value="Ribosomal_L29"/>
    <property type="match status" value="1"/>
</dbReference>
<dbReference type="SUPFAM" id="SSF46561">
    <property type="entry name" value="Ribosomal protein L29 (L29p)"/>
    <property type="match status" value="1"/>
</dbReference>
<dbReference type="PROSITE" id="PS00579">
    <property type="entry name" value="RIBOSOMAL_L29"/>
    <property type="match status" value="1"/>
</dbReference>
<organism>
    <name type="scientific">Escherichia coli O17:K52:H18 (strain UMN026 / ExPEC)</name>
    <dbReference type="NCBI Taxonomy" id="585056"/>
    <lineage>
        <taxon>Bacteria</taxon>
        <taxon>Pseudomonadati</taxon>
        <taxon>Pseudomonadota</taxon>
        <taxon>Gammaproteobacteria</taxon>
        <taxon>Enterobacterales</taxon>
        <taxon>Enterobacteriaceae</taxon>
        <taxon>Escherichia</taxon>
    </lineage>
</organism>